<dbReference type="EMBL" id="AC006200">
    <property type="protein sequence ID" value="AAD14536.1"/>
    <property type="molecule type" value="Genomic_DNA"/>
</dbReference>
<dbReference type="EMBL" id="CP002685">
    <property type="protein sequence ID" value="AEC05443.2"/>
    <property type="molecule type" value="Genomic_DNA"/>
</dbReference>
<dbReference type="EMBL" id="BT015631">
    <property type="status" value="NOT_ANNOTATED_CDS"/>
    <property type="molecule type" value="mRNA"/>
</dbReference>
<dbReference type="PIR" id="G84423">
    <property type="entry name" value="G84423"/>
</dbReference>
<dbReference type="RefSeq" id="NP_178245.3">
    <property type="nucleotide sequence ID" value="NM_126197.3"/>
</dbReference>
<dbReference type="SMR" id="Q9ZU31"/>
<dbReference type="STRING" id="3702.Q9ZU31"/>
<dbReference type="PaxDb" id="3702-AT2G01360.1"/>
<dbReference type="EnsemblPlants" id="AT2G01360.1">
    <property type="protein sequence ID" value="AT2G01360.1"/>
    <property type="gene ID" value="AT2G01360"/>
</dbReference>
<dbReference type="GeneID" id="814664"/>
<dbReference type="Gramene" id="AT2G01360.1">
    <property type="protein sequence ID" value="AT2G01360.1"/>
    <property type="gene ID" value="AT2G01360"/>
</dbReference>
<dbReference type="KEGG" id="ath:AT2G01360"/>
<dbReference type="Araport" id="AT2G01360"/>
<dbReference type="TAIR" id="AT2G01360"/>
<dbReference type="eggNOG" id="KOG4197">
    <property type="taxonomic scope" value="Eukaryota"/>
</dbReference>
<dbReference type="HOGENOM" id="CLU_1671732_0_0_1"/>
<dbReference type="InParanoid" id="Q9ZU31"/>
<dbReference type="PhylomeDB" id="Q9ZU31"/>
<dbReference type="PRO" id="PR:Q9ZU31"/>
<dbReference type="Proteomes" id="UP000006548">
    <property type="component" value="Chromosome 2"/>
</dbReference>
<dbReference type="ExpressionAtlas" id="Q9ZU31">
    <property type="expression patterns" value="baseline and differential"/>
</dbReference>
<dbReference type="Gene3D" id="1.25.40.10">
    <property type="entry name" value="Tetratricopeptide repeat domain"/>
    <property type="match status" value="1"/>
</dbReference>
<dbReference type="InterPro" id="IPR002885">
    <property type="entry name" value="Pentatricopeptide_rpt"/>
</dbReference>
<dbReference type="InterPro" id="IPR050667">
    <property type="entry name" value="PPR-containing_protein"/>
</dbReference>
<dbReference type="InterPro" id="IPR011990">
    <property type="entry name" value="TPR-like_helical_dom_sf"/>
</dbReference>
<dbReference type="NCBIfam" id="TIGR00756">
    <property type="entry name" value="PPR"/>
    <property type="match status" value="1"/>
</dbReference>
<dbReference type="PANTHER" id="PTHR47939">
    <property type="entry name" value="MEMBRANE-ASSOCIATED SALT-INDUCIBLE PROTEIN-LIKE"/>
    <property type="match status" value="1"/>
</dbReference>
<dbReference type="PANTHER" id="PTHR47939:SF1">
    <property type="entry name" value="OS04G0684500 PROTEIN"/>
    <property type="match status" value="1"/>
</dbReference>
<dbReference type="Pfam" id="PF13041">
    <property type="entry name" value="PPR_2"/>
    <property type="match status" value="1"/>
</dbReference>
<dbReference type="PROSITE" id="PS51375">
    <property type="entry name" value="PPR"/>
    <property type="match status" value="2"/>
</dbReference>
<reference key="1">
    <citation type="journal article" date="1999" name="Nature">
        <title>Sequence and analysis of chromosome 2 of the plant Arabidopsis thaliana.</title>
        <authorList>
            <person name="Lin X."/>
            <person name="Kaul S."/>
            <person name="Rounsley S.D."/>
            <person name="Shea T.P."/>
            <person name="Benito M.-I."/>
            <person name="Town C.D."/>
            <person name="Fujii C.Y."/>
            <person name="Mason T.M."/>
            <person name="Bowman C.L."/>
            <person name="Barnstead M.E."/>
            <person name="Feldblyum T.V."/>
            <person name="Buell C.R."/>
            <person name="Ketchum K.A."/>
            <person name="Lee J.J."/>
            <person name="Ronning C.M."/>
            <person name="Koo H.L."/>
            <person name="Moffat K.S."/>
            <person name="Cronin L.A."/>
            <person name="Shen M."/>
            <person name="Pai G."/>
            <person name="Van Aken S."/>
            <person name="Umayam L."/>
            <person name="Tallon L.J."/>
            <person name="Gill J.E."/>
            <person name="Adams M.D."/>
            <person name="Carrera A.J."/>
            <person name="Creasy T.H."/>
            <person name="Goodman H.M."/>
            <person name="Somerville C.R."/>
            <person name="Copenhaver G.P."/>
            <person name="Preuss D."/>
            <person name="Nierman W.C."/>
            <person name="White O."/>
            <person name="Eisen J.A."/>
            <person name="Salzberg S.L."/>
            <person name="Fraser C.M."/>
            <person name="Venter J.C."/>
        </authorList>
    </citation>
    <scope>NUCLEOTIDE SEQUENCE [LARGE SCALE GENOMIC DNA]</scope>
    <source>
        <strain>cv. Columbia</strain>
    </source>
</reference>
<reference key="2">
    <citation type="journal article" date="2017" name="Plant J.">
        <title>Araport11: a complete reannotation of the Arabidopsis thaliana reference genome.</title>
        <authorList>
            <person name="Cheng C.Y."/>
            <person name="Krishnakumar V."/>
            <person name="Chan A.P."/>
            <person name="Thibaud-Nissen F."/>
            <person name="Schobel S."/>
            <person name="Town C.D."/>
        </authorList>
    </citation>
    <scope>GENOME REANNOTATION</scope>
    <source>
        <strain>cv. Columbia</strain>
    </source>
</reference>
<reference key="3">
    <citation type="submission" date="2004-09" db="EMBL/GenBank/DDBJ databases">
        <authorList>
            <consortium name="Center for eukaryotic structural genomics (CESG)"/>
        </authorList>
    </citation>
    <scope>NUCLEOTIDE SEQUENCE [LARGE SCALE MRNA] OF 23-182</scope>
    <source>
        <strain>cv. Columbia</strain>
    </source>
</reference>
<reference key="4">
    <citation type="journal article" date="2004" name="Plant Cell">
        <title>Genome-wide analysis of Arabidopsis pentatricopeptide repeat proteins reveals their essential role in organelle biogenesis.</title>
        <authorList>
            <person name="Lurin C."/>
            <person name="Andres C."/>
            <person name="Aubourg S."/>
            <person name="Bellaoui M."/>
            <person name="Bitton F."/>
            <person name="Bruyere C."/>
            <person name="Caboche M."/>
            <person name="Debast C."/>
            <person name="Gualberto J."/>
            <person name="Hoffmann B."/>
            <person name="Lecharny A."/>
            <person name="Le Ret M."/>
            <person name="Martin-Magniette M.-L."/>
            <person name="Mireau H."/>
            <person name="Peeters N."/>
            <person name="Renou J.-P."/>
            <person name="Szurek B."/>
            <person name="Taconnat L."/>
            <person name="Small I."/>
        </authorList>
    </citation>
    <scope>GENE FAMILY</scope>
</reference>
<evidence type="ECO:0000305" key="1"/>
<proteinExistence type="evidence at transcript level"/>
<organism>
    <name type="scientific">Arabidopsis thaliana</name>
    <name type="common">Mouse-ear cress</name>
    <dbReference type="NCBI Taxonomy" id="3702"/>
    <lineage>
        <taxon>Eukaryota</taxon>
        <taxon>Viridiplantae</taxon>
        <taxon>Streptophyta</taxon>
        <taxon>Embryophyta</taxon>
        <taxon>Tracheophyta</taxon>
        <taxon>Spermatophyta</taxon>
        <taxon>Magnoliopsida</taxon>
        <taxon>eudicotyledons</taxon>
        <taxon>Gunneridae</taxon>
        <taxon>Pentapetalae</taxon>
        <taxon>rosids</taxon>
        <taxon>malvids</taxon>
        <taxon>Brassicales</taxon>
        <taxon>Brassicaceae</taxon>
        <taxon>Camelineae</taxon>
        <taxon>Arabidopsis</taxon>
    </lineage>
</organism>
<accession>Q9ZU31</accession>
<accession>F4INA1</accession>
<name>PP138_ARATH</name>
<feature type="chain" id="PRO_0000355998" description="Pentatricopeptide repeat-containing protein At2g01360">
    <location>
        <begin position="1"/>
        <end position="182"/>
    </location>
</feature>
<feature type="repeat" description="PPR 1">
    <location>
        <begin position="30"/>
        <end position="64"/>
    </location>
</feature>
<feature type="repeat" description="PPR 2">
    <location>
        <begin position="65"/>
        <end position="95"/>
    </location>
</feature>
<feature type="repeat" description="PPR 3">
    <location>
        <begin position="98"/>
        <end position="132"/>
    </location>
</feature>
<sequence>MTTNSWHSILVIYLASLALDWSLEMGIHLEKSAYLALAGNFLRSNELSKVIDVVKEMVKSQHSLGVYHGAMLIHMLGFGRRPSLAAEALDLLPDDQKGLSAYTALMDVYISAGSPEKAMKILGEMREREIMPSLGTYDVLLSGLEKTSDFQRETSSLRKEQKSLVASTRFREIVHVEDKICM</sequence>
<protein>
    <recommendedName>
        <fullName>Pentatricopeptide repeat-containing protein At2g01360</fullName>
    </recommendedName>
</protein>
<comment type="similarity">
    <text evidence="1">Belongs to the PPR family. P subfamily.</text>
</comment>
<comment type="online information" name="Pentatricopeptide repeat proteins">
    <link uri="https://ppr.plantenergy.uwa.edu.au"/>
</comment>
<gene>
    <name type="ordered locus">At2g01360</name>
    <name type="ORF">F10A8.24</name>
</gene>
<keyword id="KW-1185">Reference proteome</keyword>
<keyword id="KW-0677">Repeat</keyword>